<protein>
    <recommendedName>
        <fullName evidence="1">Nucleoid occlusion protein</fullName>
        <shortName evidence="1">Noc</shortName>
    </recommendedName>
</protein>
<comment type="function">
    <text evidence="1">Effects nucleoid occlusion by binding relatively nonspecifically to DNA and preventing the assembly of the division machinery in the vicinity of the nucleoid, especially under conditions that disturb the cell cycle. It helps to coordinate cell division and chromosome segregation by preventing the formation of the Z ring through the nucleoid, which would cause chromosome breakage.</text>
</comment>
<comment type="subcellular location">
    <subcellularLocation>
        <location evidence="1">Cytoplasm</location>
        <location evidence="1">Nucleoid</location>
    </subcellularLocation>
</comment>
<comment type="similarity">
    <text evidence="1">Belongs to the ParB family.</text>
</comment>
<sequence>MKQSFSRLFGLNDKNDDAELTANEEVQQLAIKDIVPNRFQPRTLFDEDRIAELAQTIRTHGVIQPIVVRVRDDKYEIIAGERRWRAVTSLQWETIPAIVKEFNDSQTASIALIENLQREGLTAIEEATAYAKLIEIHNLTQESLAQRLGKGQSTIANKLRLLHLPQAVQDAILNRDISERHARALIALKDAEAQEAVLKQIIEEQLNVKQTEERVKAYFKTAEEEAPKKKKPKRKSYPKDMRIAMNTIRQSVDMVMKSGLKVDTDEEDNEEFYQFTIRIPKKK</sequence>
<organism>
    <name type="scientific">Shouchella clausii (strain KSM-K16)</name>
    <name type="common">Alkalihalobacillus clausii</name>
    <dbReference type="NCBI Taxonomy" id="66692"/>
    <lineage>
        <taxon>Bacteria</taxon>
        <taxon>Bacillati</taxon>
        <taxon>Bacillota</taxon>
        <taxon>Bacilli</taxon>
        <taxon>Bacillales</taxon>
        <taxon>Bacillaceae</taxon>
        <taxon>Shouchella</taxon>
    </lineage>
</organism>
<feature type="chain" id="PRO_0000346622" description="Nucleoid occlusion protein">
    <location>
        <begin position="1"/>
        <end position="283"/>
    </location>
</feature>
<feature type="DNA-binding region" description="H-T-H motif" evidence="1">
    <location>
        <begin position="142"/>
        <end position="161"/>
    </location>
</feature>
<proteinExistence type="inferred from homology"/>
<dbReference type="EMBL" id="AP006627">
    <property type="protein sequence ID" value="BAD66645.1"/>
    <property type="molecule type" value="Genomic_DNA"/>
</dbReference>
<dbReference type="RefSeq" id="WP_011248947.1">
    <property type="nucleotide sequence ID" value="NC_006582.1"/>
</dbReference>
<dbReference type="SMR" id="Q5WAG6"/>
<dbReference type="STRING" id="66692.ABC4114"/>
<dbReference type="KEGG" id="bcl:ABC4114"/>
<dbReference type="eggNOG" id="COG1475">
    <property type="taxonomic scope" value="Bacteria"/>
</dbReference>
<dbReference type="HOGENOM" id="CLU_023853_0_1_9"/>
<dbReference type="OrthoDB" id="9802051at2"/>
<dbReference type="Proteomes" id="UP000001168">
    <property type="component" value="Chromosome"/>
</dbReference>
<dbReference type="GO" id="GO:0005694">
    <property type="term" value="C:chromosome"/>
    <property type="evidence" value="ECO:0007669"/>
    <property type="project" value="TreeGrafter"/>
</dbReference>
<dbReference type="GO" id="GO:0005737">
    <property type="term" value="C:cytoplasm"/>
    <property type="evidence" value="ECO:0007669"/>
    <property type="project" value="UniProtKB-UniRule"/>
</dbReference>
<dbReference type="GO" id="GO:0009295">
    <property type="term" value="C:nucleoid"/>
    <property type="evidence" value="ECO:0007669"/>
    <property type="project" value="UniProtKB-SubCell"/>
</dbReference>
<dbReference type="GO" id="GO:0003677">
    <property type="term" value="F:DNA binding"/>
    <property type="evidence" value="ECO:0007669"/>
    <property type="project" value="UniProtKB-UniRule"/>
</dbReference>
<dbReference type="GO" id="GO:0007059">
    <property type="term" value="P:chromosome segregation"/>
    <property type="evidence" value="ECO:0007669"/>
    <property type="project" value="TreeGrafter"/>
</dbReference>
<dbReference type="GO" id="GO:0000917">
    <property type="term" value="P:division septum assembly"/>
    <property type="evidence" value="ECO:0007669"/>
    <property type="project" value="UniProtKB-KW"/>
</dbReference>
<dbReference type="GO" id="GO:0045881">
    <property type="term" value="P:positive regulation of sporulation resulting in formation of a cellular spore"/>
    <property type="evidence" value="ECO:0007669"/>
    <property type="project" value="TreeGrafter"/>
</dbReference>
<dbReference type="CDD" id="cd16393">
    <property type="entry name" value="SPO0J_N"/>
    <property type="match status" value="1"/>
</dbReference>
<dbReference type="FunFam" id="1.10.10.2830:FF:000001">
    <property type="entry name" value="Chromosome partitioning protein ParB"/>
    <property type="match status" value="1"/>
</dbReference>
<dbReference type="FunFam" id="3.90.1530.30:FF:000001">
    <property type="entry name" value="Chromosome partitioning protein ParB"/>
    <property type="match status" value="1"/>
</dbReference>
<dbReference type="Gene3D" id="1.10.10.2830">
    <property type="match status" value="1"/>
</dbReference>
<dbReference type="Gene3D" id="3.90.1530.30">
    <property type="match status" value="1"/>
</dbReference>
<dbReference type="HAMAP" id="MF_02015">
    <property type="entry name" value="ParB_Noc"/>
    <property type="match status" value="1"/>
</dbReference>
<dbReference type="InterPro" id="IPR050336">
    <property type="entry name" value="Chromosome_partition/occlusion"/>
</dbReference>
<dbReference type="InterPro" id="IPR041468">
    <property type="entry name" value="HTH_ParB/Spo0J"/>
</dbReference>
<dbReference type="InterPro" id="IPR023705">
    <property type="entry name" value="Nucleoid_occlusion_protein"/>
</dbReference>
<dbReference type="InterPro" id="IPR004437">
    <property type="entry name" value="ParB/RepB/Spo0J"/>
</dbReference>
<dbReference type="InterPro" id="IPR003115">
    <property type="entry name" value="ParB/Sulfiredoxin_dom"/>
</dbReference>
<dbReference type="InterPro" id="IPR036086">
    <property type="entry name" value="ParB/Sulfiredoxin_sf"/>
</dbReference>
<dbReference type="NCBIfam" id="TIGR04285">
    <property type="entry name" value="nucleoid_noc"/>
    <property type="match status" value="1"/>
</dbReference>
<dbReference type="NCBIfam" id="TIGR00180">
    <property type="entry name" value="parB_part"/>
    <property type="match status" value="1"/>
</dbReference>
<dbReference type="PANTHER" id="PTHR33375">
    <property type="entry name" value="CHROMOSOME-PARTITIONING PROTEIN PARB-RELATED"/>
    <property type="match status" value="1"/>
</dbReference>
<dbReference type="PANTHER" id="PTHR33375:SF8">
    <property type="entry name" value="NUCLEOID OCCLUSION PROTEIN"/>
    <property type="match status" value="1"/>
</dbReference>
<dbReference type="Pfam" id="PF17762">
    <property type="entry name" value="HTH_ParB"/>
    <property type="match status" value="1"/>
</dbReference>
<dbReference type="Pfam" id="PF02195">
    <property type="entry name" value="ParBc"/>
    <property type="match status" value="1"/>
</dbReference>
<dbReference type="SMART" id="SM00470">
    <property type="entry name" value="ParB"/>
    <property type="match status" value="1"/>
</dbReference>
<dbReference type="SUPFAM" id="SSF109709">
    <property type="entry name" value="KorB DNA-binding domain-like"/>
    <property type="match status" value="1"/>
</dbReference>
<dbReference type="SUPFAM" id="SSF110849">
    <property type="entry name" value="ParB/Sulfiredoxin"/>
    <property type="match status" value="1"/>
</dbReference>
<evidence type="ECO:0000255" key="1">
    <source>
        <dbReference type="HAMAP-Rule" id="MF_02015"/>
    </source>
</evidence>
<accession>Q5WAG6</accession>
<gene>
    <name evidence="1" type="primary">noc</name>
    <name type="ordered locus">ABC4114</name>
</gene>
<keyword id="KW-0131">Cell cycle</keyword>
<keyword id="KW-0132">Cell division</keyword>
<keyword id="KW-0963">Cytoplasm</keyword>
<keyword id="KW-0238">DNA-binding</keyword>
<keyword id="KW-1185">Reference proteome</keyword>
<keyword id="KW-0717">Septation</keyword>
<name>NOC_SHOC1</name>
<reference key="1">
    <citation type="submission" date="2003-10" db="EMBL/GenBank/DDBJ databases">
        <title>The complete genome sequence of the alkaliphilic Bacillus clausii KSM-K16.</title>
        <authorList>
            <person name="Takaki Y."/>
            <person name="Kageyama Y."/>
            <person name="Shimamura S."/>
            <person name="Suzuki H."/>
            <person name="Nishi S."/>
            <person name="Hatada Y."/>
            <person name="Kawai S."/>
            <person name="Ito S."/>
            <person name="Horikoshi K."/>
        </authorList>
    </citation>
    <scope>NUCLEOTIDE SEQUENCE [LARGE SCALE GENOMIC DNA]</scope>
    <source>
        <strain>KSM-K16</strain>
    </source>
</reference>